<reference key="1">
    <citation type="submission" date="2007-11" db="EMBL/GenBank/DDBJ databases">
        <authorList>
            <consortium name="The Salmonella enterica serovar Paratyphi B Genome Sequencing Project"/>
            <person name="McClelland M."/>
            <person name="Sanderson E.K."/>
            <person name="Porwollik S."/>
            <person name="Spieth J."/>
            <person name="Clifton W.S."/>
            <person name="Fulton R."/>
            <person name="Cordes M."/>
            <person name="Wollam A."/>
            <person name="Shah N."/>
            <person name="Pepin K."/>
            <person name="Bhonagiri V."/>
            <person name="Nash W."/>
            <person name="Johnson M."/>
            <person name="Thiruvilangam P."/>
            <person name="Wilson R."/>
        </authorList>
    </citation>
    <scope>NUCLEOTIDE SEQUENCE [LARGE SCALE GENOMIC DNA]</scope>
    <source>
        <strain>ATCC BAA-1250 / SPB7</strain>
    </source>
</reference>
<evidence type="ECO:0000255" key="1">
    <source>
        <dbReference type="HAMAP-Rule" id="MF_01085"/>
    </source>
</evidence>
<evidence type="ECO:0000256" key="2">
    <source>
        <dbReference type="SAM" id="MobiDB-lite"/>
    </source>
</evidence>
<sequence length="353" mass="39309">MSEPLKPRIDFAEPLKEEPTSAFKAQQTFSEAESRTFAPAAIDERPEDEGVAEAAVDAALRPKRSLWRKMVMGGLALFGASVVGQGVQWTMNAWQTQDWVALGGCAAGALIVGAGVGSVVTEWRRLWRLRQRAHERDEARELLHSHSVGKGRAFCEKLAQQAGIDQSHPALQRWYAAIHETQNDREIVGLYAHLVQPVLDAQARREISRFAAESTLMIAVSPLALVDMAFIAWRNLRLINRIATLYGIELGYYSRLRLFRLVLLNIAFAGASELMREVGMDWMSQDLAARLSTRAAQGIGAGLLTARLGIKAMELCRPLPWIDNDKPRLGDFRRQLIGQLKETLQKSKSSPEK</sequence>
<comment type="subcellular location">
    <subcellularLocation>
        <location evidence="1">Cell inner membrane</location>
        <topology evidence="1">Multi-pass membrane protein</topology>
    </subcellularLocation>
</comment>
<comment type="similarity">
    <text evidence="1">Belongs to the UPF0283 family.</text>
</comment>
<proteinExistence type="inferred from homology"/>
<dbReference type="EMBL" id="CP000886">
    <property type="protein sequence ID" value="ABX66971.1"/>
    <property type="molecule type" value="Genomic_DNA"/>
</dbReference>
<dbReference type="RefSeq" id="WP_001294470.1">
    <property type="nucleotide sequence ID" value="NC_010102.1"/>
</dbReference>
<dbReference type="SMR" id="A9MWW8"/>
<dbReference type="KEGG" id="spq:SPAB_01574"/>
<dbReference type="PATRIC" id="fig|1016998.12.peg.1481"/>
<dbReference type="HOGENOM" id="CLU_057693_2_0_6"/>
<dbReference type="BioCyc" id="SENT1016998:SPAB_RS06400-MONOMER"/>
<dbReference type="Proteomes" id="UP000008556">
    <property type="component" value="Chromosome"/>
</dbReference>
<dbReference type="GO" id="GO:0005886">
    <property type="term" value="C:plasma membrane"/>
    <property type="evidence" value="ECO:0007669"/>
    <property type="project" value="UniProtKB-SubCell"/>
</dbReference>
<dbReference type="HAMAP" id="MF_01085">
    <property type="entry name" value="UPF0283"/>
    <property type="match status" value="1"/>
</dbReference>
<dbReference type="InterPro" id="IPR021147">
    <property type="entry name" value="DUF697"/>
</dbReference>
<dbReference type="InterPro" id="IPR006507">
    <property type="entry name" value="UPF0283"/>
</dbReference>
<dbReference type="NCBIfam" id="TIGR01620">
    <property type="entry name" value="hyp_HI0043"/>
    <property type="match status" value="1"/>
</dbReference>
<dbReference type="PANTHER" id="PTHR39342">
    <property type="entry name" value="UPF0283 MEMBRANE PROTEIN YCJF"/>
    <property type="match status" value="1"/>
</dbReference>
<dbReference type="PANTHER" id="PTHR39342:SF1">
    <property type="entry name" value="UPF0283 MEMBRANE PROTEIN YCJF"/>
    <property type="match status" value="1"/>
</dbReference>
<dbReference type="Pfam" id="PF05128">
    <property type="entry name" value="DUF697"/>
    <property type="match status" value="1"/>
</dbReference>
<feature type="chain" id="PRO_1000084781" description="UPF0283 membrane protein YcjF">
    <location>
        <begin position="1"/>
        <end position="353"/>
    </location>
</feature>
<feature type="transmembrane region" description="Helical" evidence="1">
    <location>
        <begin position="70"/>
        <end position="90"/>
    </location>
</feature>
<feature type="transmembrane region" description="Helical" evidence="1">
    <location>
        <begin position="100"/>
        <end position="120"/>
    </location>
</feature>
<feature type="transmembrane region" description="Helical" evidence="1">
    <location>
        <begin position="213"/>
        <end position="233"/>
    </location>
</feature>
<feature type="region of interest" description="Disordered" evidence="2">
    <location>
        <begin position="1"/>
        <end position="35"/>
    </location>
</feature>
<feature type="compositionally biased region" description="Basic and acidic residues" evidence="2">
    <location>
        <begin position="1"/>
        <end position="19"/>
    </location>
</feature>
<keyword id="KW-0997">Cell inner membrane</keyword>
<keyword id="KW-1003">Cell membrane</keyword>
<keyword id="KW-0472">Membrane</keyword>
<keyword id="KW-0812">Transmembrane</keyword>
<keyword id="KW-1133">Transmembrane helix</keyword>
<gene>
    <name evidence="1" type="primary">ycjF</name>
    <name type="ordered locus">SPAB_01574</name>
</gene>
<accession>A9MWW8</accession>
<protein>
    <recommendedName>
        <fullName evidence="1">UPF0283 membrane protein YcjF</fullName>
    </recommendedName>
</protein>
<name>YCJF_SALPB</name>
<organism>
    <name type="scientific">Salmonella paratyphi B (strain ATCC BAA-1250 / SPB7)</name>
    <dbReference type="NCBI Taxonomy" id="1016998"/>
    <lineage>
        <taxon>Bacteria</taxon>
        <taxon>Pseudomonadati</taxon>
        <taxon>Pseudomonadota</taxon>
        <taxon>Gammaproteobacteria</taxon>
        <taxon>Enterobacterales</taxon>
        <taxon>Enterobacteriaceae</taxon>
        <taxon>Salmonella</taxon>
    </lineage>
</organism>